<name>FMT_PSEPK</name>
<proteinExistence type="inferred from homology"/>
<reference key="1">
    <citation type="journal article" date="2002" name="Environ. Microbiol.">
        <title>Complete genome sequence and comparative analysis of the metabolically versatile Pseudomonas putida KT2440.</title>
        <authorList>
            <person name="Nelson K.E."/>
            <person name="Weinel C."/>
            <person name="Paulsen I.T."/>
            <person name="Dodson R.J."/>
            <person name="Hilbert H."/>
            <person name="Martins dos Santos V.A.P."/>
            <person name="Fouts D.E."/>
            <person name="Gill S.R."/>
            <person name="Pop M."/>
            <person name="Holmes M."/>
            <person name="Brinkac L.M."/>
            <person name="Beanan M.J."/>
            <person name="DeBoy R.T."/>
            <person name="Daugherty S.C."/>
            <person name="Kolonay J.F."/>
            <person name="Madupu R."/>
            <person name="Nelson W.C."/>
            <person name="White O."/>
            <person name="Peterson J.D."/>
            <person name="Khouri H.M."/>
            <person name="Hance I."/>
            <person name="Chris Lee P."/>
            <person name="Holtzapple E.K."/>
            <person name="Scanlan D."/>
            <person name="Tran K."/>
            <person name="Moazzez A."/>
            <person name="Utterback T.R."/>
            <person name="Rizzo M."/>
            <person name="Lee K."/>
            <person name="Kosack D."/>
            <person name="Moestl D."/>
            <person name="Wedler H."/>
            <person name="Lauber J."/>
            <person name="Stjepandic D."/>
            <person name="Hoheisel J."/>
            <person name="Straetz M."/>
            <person name="Heim S."/>
            <person name="Kiewitz C."/>
            <person name="Eisen J.A."/>
            <person name="Timmis K.N."/>
            <person name="Duesterhoeft A."/>
            <person name="Tuemmler B."/>
            <person name="Fraser C.M."/>
        </authorList>
    </citation>
    <scope>NUCLEOTIDE SEQUENCE [LARGE SCALE GENOMIC DNA]</scope>
    <source>
        <strain>ATCC 47054 / DSM 6125 / CFBP 8728 / NCIMB 11950 / KT2440</strain>
    </source>
</reference>
<evidence type="ECO:0000255" key="1">
    <source>
        <dbReference type="HAMAP-Rule" id="MF_00182"/>
    </source>
</evidence>
<keyword id="KW-0648">Protein biosynthesis</keyword>
<keyword id="KW-1185">Reference proteome</keyword>
<keyword id="KW-0808">Transferase</keyword>
<protein>
    <recommendedName>
        <fullName evidence="1">Methionyl-tRNA formyltransferase</fullName>
        <ecNumber evidence="1">2.1.2.9</ecNumber>
    </recommendedName>
</protein>
<dbReference type="EC" id="2.1.2.9" evidence="1"/>
<dbReference type="EMBL" id="AE015451">
    <property type="protein sequence ID" value="AAN65701.1"/>
    <property type="molecule type" value="Genomic_DNA"/>
</dbReference>
<dbReference type="RefSeq" id="NP_742237.1">
    <property type="nucleotide sequence ID" value="NC_002947.4"/>
</dbReference>
<dbReference type="RefSeq" id="WP_010951474.1">
    <property type="nucleotide sequence ID" value="NZ_CP169744.1"/>
</dbReference>
<dbReference type="SMR" id="Q88RR2"/>
<dbReference type="STRING" id="160488.PP_0067"/>
<dbReference type="PaxDb" id="160488-PP_0067"/>
<dbReference type="GeneID" id="83677311"/>
<dbReference type="KEGG" id="ppu:PP_0067"/>
<dbReference type="PATRIC" id="fig|160488.4.peg.72"/>
<dbReference type="eggNOG" id="COG0223">
    <property type="taxonomic scope" value="Bacteria"/>
</dbReference>
<dbReference type="HOGENOM" id="CLU_033347_1_2_6"/>
<dbReference type="OrthoDB" id="9802815at2"/>
<dbReference type="PhylomeDB" id="Q88RR2"/>
<dbReference type="BioCyc" id="PPUT160488:G1G01-70-MONOMER"/>
<dbReference type="Proteomes" id="UP000000556">
    <property type="component" value="Chromosome"/>
</dbReference>
<dbReference type="GO" id="GO:0005829">
    <property type="term" value="C:cytosol"/>
    <property type="evidence" value="ECO:0007669"/>
    <property type="project" value="TreeGrafter"/>
</dbReference>
<dbReference type="GO" id="GO:0004479">
    <property type="term" value="F:methionyl-tRNA formyltransferase activity"/>
    <property type="evidence" value="ECO:0007669"/>
    <property type="project" value="UniProtKB-UniRule"/>
</dbReference>
<dbReference type="CDD" id="cd08646">
    <property type="entry name" value="FMT_core_Met-tRNA-FMT_N"/>
    <property type="match status" value="1"/>
</dbReference>
<dbReference type="CDD" id="cd08704">
    <property type="entry name" value="Met_tRNA_FMT_C"/>
    <property type="match status" value="1"/>
</dbReference>
<dbReference type="FunFam" id="3.40.50.170:FF:000003">
    <property type="entry name" value="Methionyl-tRNA formyltransferase"/>
    <property type="match status" value="1"/>
</dbReference>
<dbReference type="Gene3D" id="3.10.25.10">
    <property type="entry name" value="Formyl transferase, C-terminal domain"/>
    <property type="match status" value="1"/>
</dbReference>
<dbReference type="Gene3D" id="3.40.50.170">
    <property type="entry name" value="Formyl transferase, N-terminal domain"/>
    <property type="match status" value="1"/>
</dbReference>
<dbReference type="HAMAP" id="MF_00182">
    <property type="entry name" value="Formyl_trans"/>
    <property type="match status" value="1"/>
</dbReference>
<dbReference type="InterPro" id="IPR005794">
    <property type="entry name" value="Fmt"/>
</dbReference>
<dbReference type="InterPro" id="IPR005793">
    <property type="entry name" value="Formyl_trans_C"/>
</dbReference>
<dbReference type="InterPro" id="IPR037022">
    <property type="entry name" value="Formyl_trans_C_sf"/>
</dbReference>
<dbReference type="InterPro" id="IPR002376">
    <property type="entry name" value="Formyl_transf_N"/>
</dbReference>
<dbReference type="InterPro" id="IPR036477">
    <property type="entry name" value="Formyl_transf_N_sf"/>
</dbReference>
<dbReference type="InterPro" id="IPR011034">
    <property type="entry name" value="Formyl_transferase-like_C_sf"/>
</dbReference>
<dbReference type="InterPro" id="IPR001555">
    <property type="entry name" value="GART_AS"/>
</dbReference>
<dbReference type="InterPro" id="IPR044135">
    <property type="entry name" value="Met-tRNA-FMT_C"/>
</dbReference>
<dbReference type="InterPro" id="IPR041711">
    <property type="entry name" value="Met-tRNA-FMT_N"/>
</dbReference>
<dbReference type="NCBIfam" id="TIGR00460">
    <property type="entry name" value="fmt"/>
    <property type="match status" value="1"/>
</dbReference>
<dbReference type="PANTHER" id="PTHR11138">
    <property type="entry name" value="METHIONYL-TRNA FORMYLTRANSFERASE"/>
    <property type="match status" value="1"/>
</dbReference>
<dbReference type="PANTHER" id="PTHR11138:SF5">
    <property type="entry name" value="METHIONYL-TRNA FORMYLTRANSFERASE, MITOCHONDRIAL"/>
    <property type="match status" value="1"/>
</dbReference>
<dbReference type="Pfam" id="PF02911">
    <property type="entry name" value="Formyl_trans_C"/>
    <property type="match status" value="1"/>
</dbReference>
<dbReference type="Pfam" id="PF00551">
    <property type="entry name" value="Formyl_trans_N"/>
    <property type="match status" value="1"/>
</dbReference>
<dbReference type="SUPFAM" id="SSF50486">
    <property type="entry name" value="FMT C-terminal domain-like"/>
    <property type="match status" value="1"/>
</dbReference>
<dbReference type="SUPFAM" id="SSF53328">
    <property type="entry name" value="Formyltransferase"/>
    <property type="match status" value="1"/>
</dbReference>
<dbReference type="PROSITE" id="PS00373">
    <property type="entry name" value="GART"/>
    <property type="match status" value="1"/>
</dbReference>
<accession>Q88RR2</accession>
<comment type="function">
    <text evidence="1">Attaches a formyl group to the free amino group of methionyl-tRNA(fMet). The formyl group appears to play a dual role in the initiator identity of N-formylmethionyl-tRNA by promoting its recognition by IF2 and preventing the misappropriation of this tRNA by the elongation apparatus.</text>
</comment>
<comment type="catalytic activity">
    <reaction evidence="1">
        <text>L-methionyl-tRNA(fMet) + (6R)-10-formyltetrahydrofolate = N-formyl-L-methionyl-tRNA(fMet) + (6S)-5,6,7,8-tetrahydrofolate + H(+)</text>
        <dbReference type="Rhea" id="RHEA:24380"/>
        <dbReference type="Rhea" id="RHEA-COMP:9952"/>
        <dbReference type="Rhea" id="RHEA-COMP:9953"/>
        <dbReference type="ChEBI" id="CHEBI:15378"/>
        <dbReference type="ChEBI" id="CHEBI:57453"/>
        <dbReference type="ChEBI" id="CHEBI:78530"/>
        <dbReference type="ChEBI" id="CHEBI:78844"/>
        <dbReference type="ChEBI" id="CHEBI:195366"/>
        <dbReference type="EC" id="2.1.2.9"/>
    </reaction>
</comment>
<comment type="similarity">
    <text evidence="1">Belongs to the Fmt family.</text>
</comment>
<feature type="chain" id="PRO_0000083018" description="Methionyl-tRNA formyltransferase">
    <location>
        <begin position="1"/>
        <end position="310"/>
    </location>
</feature>
<feature type="binding site" evidence="1">
    <location>
        <begin position="109"/>
        <end position="112"/>
    </location>
    <ligand>
        <name>(6S)-5,6,7,8-tetrahydrofolate</name>
        <dbReference type="ChEBI" id="CHEBI:57453"/>
    </ligand>
</feature>
<sequence length="310" mass="32823">MRIVFAGTPEFAAEHLKALLDSPYEIVAVYTQPDRPAGRGQKLMPSAVKALAVAHDIPVFQPQTLRNADAQAELAALKPDLMVVVAYGLILPQVVLDIPRLGCINSHASLLPRWRGAAPIQRAVEAGDAESGVTVMRMEAGLDTGPMLLKVVTPISAEDTGGTLHDRLAEMGPPAVVQAIAGLADGSLQGEIQDDALATYAHKLNKDEARIDWTHPAVELERLIRAFNPWPVCHSTLDGESVKVLAANLSTGQGAPGEILSASKDGLVVACGDQALSLTRLQLPGGKALSFSDLFNSRREKFAAGKVLGQ</sequence>
<organism>
    <name type="scientific">Pseudomonas putida (strain ATCC 47054 / DSM 6125 / CFBP 8728 / NCIMB 11950 / KT2440)</name>
    <dbReference type="NCBI Taxonomy" id="160488"/>
    <lineage>
        <taxon>Bacteria</taxon>
        <taxon>Pseudomonadati</taxon>
        <taxon>Pseudomonadota</taxon>
        <taxon>Gammaproteobacteria</taxon>
        <taxon>Pseudomonadales</taxon>
        <taxon>Pseudomonadaceae</taxon>
        <taxon>Pseudomonas</taxon>
    </lineage>
</organism>
<gene>
    <name evidence="1" type="primary">fmt</name>
    <name type="ordered locus">PP_0067</name>
</gene>